<organism>
    <name type="scientific">Pseudomonas aeruginosa (strain ATCC 15692 / DSM 22644 / CIP 104116 / JCM 14847 / LMG 12228 / 1C / PRS 101 / PAO1)</name>
    <dbReference type="NCBI Taxonomy" id="208964"/>
    <lineage>
        <taxon>Bacteria</taxon>
        <taxon>Pseudomonadati</taxon>
        <taxon>Pseudomonadota</taxon>
        <taxon>Gammaproteobacteria</taxon>
        <taxon>Pseudomonadales</taxon>
        <taxon>Pseudomonadaceae</taxon>
        <taxon>Pseudomonas</taxon>
    </lineage>
</organism>
<evidence type="ECO:0000269" key="1">
    <source>
    </source>
</evidence>
<evidence type="ECO:0000269" key="2">
    <source>
    </source>
</evidence>
<evidence type="ECO:0000269" key="3">
    <source>
    </source>
</evidence>
<evidence type="ECO:0000269" key="4">
    <source>
    </source>
</evidence>
<evidence type="ECO:0000269" key="5">
    <source>
    </source>
</evidence>
<evidence type="ECO:0000269" key="6">
    <source ref="3"/>
</evidence>
<evidence type="ECO:0000303" key="7">
    <source>
    </source>
</evidence>
<evidence type="ECO:0000305" key="8"/>
<evidence type="ECO:0000312" key="9">
    <source>
        <dbReference type="EMBL" id="AAF21029.2"/>
    </source>
</evidence>
<evidence type="ECO:0000312" key="10">
    <source>
        <dbReference type="EMBL" id="AAG05582.1"/>
    </source>
</evidence>
<protein>
    <recommendedName>
        <fullName evidence="10">Hydrogen cyanide synthase subunit HcnB</fullName>
        <shortName evidence="7">HcnB</shortName>
        <ecNumber evidence="1 3">1.4.99.5</ecNumber>
    </recommendedName>
    <alternativeName>
        <fullName evidence="7">Glycine dehydrogenase (cyanide-forming)</fullName>
    </alternativeName>
</protein>
<accession>Q9I1S2</accession>
<accession>Q9REV8</accession>
<proteinExistence type="evidence at protein level"/>
<feature type="chain" id="PRO_0000419811" description="Hydrogen cyanide synthase subunit HcnB">
    <location>
        <begin position="1"/>
        <end position="464"/>
    </location>
</feature>
<feature type="sequence conflict" description="In Ref. 1; AAF21029." evidence="8" ref="1">
    <original>R</original>
    <variation>A</variation>
    <location>
        <position position="371"/>
    </location>
</feature>
<keyword id="KW-1003">Cell membrane</keyword>
<keyword id="KW-0472">Membrane</keyword>
<keyword id="KW-0560">Oxidoreductase</keyword>
<keyword id="KW-1185">Reference proteome</keyword>
<gene>
    <name evidence="10" type="primary">hcnB</name>
    <name type="ordered locus">PA2194</name>
</gene>
<sequence>MNLRPVIVGGGSAGMAAAIELARRGVPCVLFDEASRPGGVVYRGPLRAGVDPAYLGARYTRMLEKLRRDFSACAGHIDLRLNSRVVGGDGQRLMVLDEAERLHEVEYSHLLLATGCHERSVPFPGWTLPGVMLLGGLQLQIKSGVVKPLGDTLIAGSGPLLPLVACQLHAAGVRVAGVYEACAFGRMARESLALLNKPQLFLDGLSMLGYLKLNGIPLHYGWGVVEASGDGELTEVTVAPYDEEWRPDLENARPVKASTLAVGYGFIPRTQLSQQLGLEHGFSDDGYLRAECNVWQQSSQPHIHLAGDMAGIRGGEAAMIGGRIAALSILLQREAIAPAEAIERRESHLARLEAIKRFRAGVERYTQRGARQVELARADTVICRCEQVTRGDIERALEQGVQDIAGLKMRTRAGMGDCQGRMCIGYCSDRLRRATGRHDVGWLRPRFPIDPIPFSAFQNLGTEA</sequence>
<dbReference type="EC" id="1.4.99.5" evidence="1 3"/>
<dbReference type="EMBL" id="AF208523">
    <property type="protein sequence ID" value="AAF21029.2"/>
    <property type="molecule type" value="Genomic_DNA"/>
</dbReference>
<dbReference type="EMBL" id="AE004091">
    <property type="protein sequence ID" value="AAG05582.1"/>
    <property type="molecule type" value="Genomic_DNA"/>
</dbReference>
<dbReference type="PIR" id="G83370">
    <property type="entry name" value="G83370"/>
</dbReference>
<dbReference type="RefSeq" id="NP_250884.1">
    <property type="nucleotide sequence ID" value="NC_002516.2"/>
</dbReference>
<dbReference type="RefSeq" id="WP_003113685.1">
    <property type="nucleotide sequence ID" value="NZ_QZGE01000014.1"/>
</dbReference>
<dbReference type="SMR" id="Q9I1S2"/>
<dbReference type="STRING" id="208964.PA2194"/>
<dbReference type="PaxDb" id="208964-PA2194"/>
<dbReference type="DNASU" id="882182"/>
<dbReference type="GeneID" id="882182"/>
<dbReference type="KEGG" id="pae:PA2194"/>
<dbReference type="PATRIC" id="fig|208964.12.peg.2298"/>
<dbReference type="PseudoCAP" id="PA2194"/>
<dbReference type="HOGENOM" id="CLU_030705_1_0_6"/>
<dbReference type="InParanoid" id="Q9I1S2"/>
<dbReference type="OrthoDB" id="9801699at2"/>
<dbReference type="PhylomeDB" id="Q9I1S2"/>
<dbReference type="BioCyc" id="PAER208964:G1FZ6-2234-MONOMER"/>
<dbReference type="Proteomes" id="UP000002438">
    <property type="component" value="Chromosome"/>
</dbReference>
<dbReference type="GO" id="GO:0005886">
    <property type="term" value="C:plasma membrane"/>
    <property type="evidence" value="ECO:0007669"/>
    <property type="project" value="UniProtKB-SubCell"/>
</dbReference>
<dbReference type="GO" id="GO:0050622">
    <property type="term" value="F:glycine dehydrogenase (cyanide-forming) activity"/>
    <property type="evidence" value="ECO:0007669"/>
    <property type="project" value="UniProtKB-EC"/>
</dbReference>
<dbReference type="CDD" id="cd19946">
    <property type="entry name" value="GlpA-like_Fer2_BFD-like"/>
    <property type="match status" value="1"/>
</dbReference>
<dbReference type="Gene3D" id="1.10.10.1100">
    <property type="entry name" value="BFD-like [2Fe-2S]-binding domain"/>
    <property type="match status" value="1"/>
</dbReference>
<dbReference type="Gene3D" id="3.50.50.60">
    <property type="entry name" value="FAD/NAD(P)-binding domain"/>
    <property type="match status" value="2"/>
</dbReference>
<dbReference type="InterPro" id="IPR007419">
    <property type="entry name" value="BFD-like_2Fe2S-bd_dom"/>
</dbReference>
<dbReference type="InterPro" id="IPR041854">
    <property type="entry name" value="BFD-like_2Fe2S-bd_dom_sf"/>
</dbReference>
<dbReference type="InterPro" id="IPR036188">
    <property type="entry name" value="FAD/NAD-bd_sf"/>
</dbReference>
<dbReference type="InterPro" id="IPR023753">
    <property type="entry name" value="FAD/NAD-binding_dom"/>
</dbReference>
<dbReference type="InterPro" id="IPR051691">
    <property type="entry name" value="Metab_Enz_Cyan_OpOx_G3PDH"/>
</dbReference>
<dbReference type="InterPro" id="IPR017224">
    <property type="entry name" value="Opine_Oxase_asu/HCN_bsu"/>
</dbReference>
<dbReference type="PANTHER" id="PTHR42949">
    <property type="entry name" value="ANAEROBIC GLYCEROL-3-PHOSPHATE DEHYDROGENASE SUBUNIT B"/>
    <property type="match status" value="1"/>
</dbReference>
<dbReference type="PANTHER" id="PTHR42949:SF3">
    <property type="entry name" value="ANAEROBIC GLYCEROL-3-PHOSPHATE DEHYDROGENASE SUBUNIT B"/>
    <property type="match status" value="1"/>
</dbReference>
<dbReference type="Pfam" id="PF04324">
    <property type="entry name" value="Fer2_BFD"/>
    <property type="match status" value="1"/>
</dbReference>
<dbReference type="Pfam" id="PF07992">
    <property type="entry name" value="Pyr_redox_2"/>
    <property type="match status" value="1"/>
</dbReference>
<dbReference type="PIRSF" id="PIRSF037495">
    <property type="entry name" value="Opine_OX_OoxA/HcnB"/>
    <property type="match status" value="1"/>
</dbReference>
<dbReference type="PRINTS" id="PR00368">
    <property type="entry name" value="FADPNR"/>
</dbReference>
<dbReference type="SUPFAM" id="SSF51905">
    <property type="entry name" value="FAD/NAD(P)-binding domain"/>
    <property type="match status" value="1"/>
</dbReference>
<reference evidence="8 9" key="1">
    <citation type="journal article" date="2000" name="J. Bacteriol.">
        <title>Transcriptional control of the hydrogen cyanide biosynthetic genes hcnABC by the anaerobic regulator ANR and the quorum-sensing regulators LasR and RhlR in Pseudomonas aeruginosa.</title>
        <authorList>
            <person name="Pessi G."/>
            <person name="Haas D."/>
        </authorList>
    </citation>
    <scope>NUCLEOTIDE SEQUENCE [GENOMIC DNA]</scope>
    <scope>FUNCTION</scope>
    <scope>INDUCTION</scope>
    <source>
        <strain evidence="9">ATCC 15692 / DSM 22644 / CIP 104116 / JCM 14847 / LMG 12228 / 1C / PRS 101 / PAO1</strain>
    </source>
</reference>
<reference evidence="10" key="2">
    <citation type="journal article" date="2000" name="Nature">
        <title>Complete genome sequence of Pseudomonas aeruginosa PAO1, an opportunistic pathogen.</title>
        <authorList>
            <person name="Stover C.K."/>
            <person name="Pham X.-Q.T."/>
            <person name="Erwin A.L."/>
            <person name="Mizoguchi S.D."/>
            <person name="Warrener P."/>
            <person name="Hickey M.J."/>
            <person name="Brinkman F.S.L."/>
            <person name="Hufnagle W.O."/>
            <person name="Kowalik D.J."/>
            <person name="Lagrou M."/>
            <person name="Garber R.L."/>
            <person name="Goltry L."/>
            <person name="Tolentino E."/>
            <person name="Westbrock-Wadman S."/>
            <person name="Yuan Y."/>
            <person name="Brody L.L."/>
            <person name="Coulter S.N."/>
            <person name="Folger K.R."/>
            <person name="Kas A."/>
            <person name="Larbig K."/>
            <person name="Lim R.M."/>
            <person name="Smith K.A."/>
            <person name="Spencer D.H."/>
            <person name="Wong G.K.-S."/>
            <person name="Wu Z."/>
            <person name="Paulsen I.T."/>
            <person name="Reizer J."/>
            <person name="Saier M.H. Jr."/>
            <person name="Hancock R.E.W."/>
            <person name="Lory S."/>
            <person name="Olson M.V."/>
        </authorList>
    </citation>
    <scope>NUCLEOTIDE SEQUENCE [LARGE SCALE GENOMIC DNA]</scope>
    <source>
        <strain>ATCC 15692 / DSM 22644 / CIP 104116 / JCM 14847 / LMG 12228 / 1C / PRS 101 / PAO1</strain>
    </source>
</reference>
<reference evidence="8" key="3">
    <citation type="journal article" date="1968" name="Physiol. Plantarum">
        <title>Growth curves and pH optima for cyanide producing bacteria.</title>
        <authorList>
            <person name="Wissing F."/>
        </authorList>
    </citation>
    <scope>ACTIVITY REGULATION</scope>
    <scope>BIOPHYSICOCHEMICAL PROPERTIES</scope>
</reference>
<reference evidence="8" key="4">
    <citation type="journal article" date="1974" name="J. Bacteriol.">
        <title>Cyanide formation from oxidation of glycine of Pseudomonas species.</title>
        <authorList>
            <person name="Wissing F."/>
        </authorList>
    </citation>
    <scope>FUNCTION</scope>
    <scope>ACTIVITY REGULATION</scope>
    <scope>BIOPHYSICOCHEMICAL PROPERTIES</scope>
    <source>
        <strain evidence="5">C</strain>
    </source>
</reference>
<reference evidence="8" key="5">
    <citation type="journal article" date="1975" name="J. Bacteriol.">
        <title>Cyanide production from glycine by a homogenate from a Pseudomonas species.</title>
        <authorList>
            <person name="Wissing F."/>
        </authorList>
    </citation>
    <scope>BIOPHYSICOCHEMICAL PROPERTIES</scope>
    <scope>SUBCELLULAR LOCATION</scope>
</reference>
<reference evidence="8" key="6">
    <citation type="journal article" date="1977" name="J. Bacteriol.">
        <title>Glycine metabolism by Pseudomonas aeruginosa: hydrogen cyanide biosynthesis.</title>
        <authorList>
            <person name="Castric P.A."/>
        </authorList>
    </citation>
    <scope>FUNCTION</scope>
    <scope>CATALYTIC ACTIVITY</scope>
    <source>
        <strain evidence="3">9-D2</strain>
    </source>
</reference>
<reference evidence="8" key="7">
    <citation type="journal article" date="2000" name="Arch. Microbiol.">
        <title>Mechanism, regulation, and ecological role of bacterial cyanide biosynthesis.</title>
        <authorList>
            <person name="Blumer C."/>
            <person name="Haas D."/>
        </authorList>
    </citation>
    <scope>FUNCTION</scope>
    <scope>CATALYTIC ACTIVITY</scope>
</reference>
<name>HCNB_PSEAE</name>
<comment type="function">
    <text evidence="1 2 3 5">A three-component membrane-bound flavoenzyme that catalyzes the formation of hydrogen cyanide, a secondary metabolite, by transfer of electrons to a cyanide-resistant branch of the aerobic respiratory chain.</text>
</comment>
<comment type="catalytic activity">
    <reaction evidence="1 3">
        <text>glycine + 2 A = hydrogen cyanide + 2 AH2 + CO2</text>
        <dbReference type="Rhea" id="RHEA:15821"/>
        <dbReference type="ChEBI" id="CHEBI:13193"/>
        <dbReference type="ChEBI" id="CHEBI:16526"/>
        <dbReference type="ChEBI" id="CHEBI:17499"/>
        <dbReference type="ChEBI" id="CHEBI:18407"/>
        <dbReference type="ChEBI" id="CHEBI:57305"/>
        <dbReference type="EC" id="1.4.99.5"/>
    </reaction>
</comment>
<comment type="activity regulation">
    <text evidence="5 6">Oxygen is necessary for cyanogenesis. Activated by succinate, glycine methyl ester, glucose and D,L-methionine in addition to glycine. Phenazine methosulfate, methylene blue, 2,6-dichlorophenolindophenol (DCIP) and ferricyanide can replace oxygen for the reaction. Inhibited by pyrrolnitrin and acriflavine at 1 mM concentration.</text>
</comment>
<comment type="biophysicochemical properties">
    <kinetics>
        <KM evidence="4 5 6">50 mM for glycine</KM>
        <text evidence="5">Measured for the whole complex.</text>
    </kinetics>
    <phDependence>
        <text evidence="4 5 6">Optimum pH is 8.3 (in the presence of Tris-HCl). Active from 7.3-7.8 in the presence of other buffers.</text>
    </phDependence>
    <temperatureDependence>
        <text evidence="4 5 6">Not stable at 0 degrees Celsius. Decrease in activity up to 40% immediately after freeze-drying procedure, with a further decrease up to 10% when stored at -10 degrees Celsius.</text>
    </temperatureDependence>
</comment>
<comment type="subunit">
    <text evidence="8">Heterotrimer of HcnA, HcnB and HcnC.</text>
</comment>
<comment type="subcellular location">
    <subcellularLocation>
        <location evidence="4">Cell membrane</location>
    </subcellularLocation>
</comment>
<comment type="induction">
    <text evidence="2">Reduced oxygen levels.</text>
</comment>